<evidence type="ECO:0000255" key="1"/>
<evidence type="ECO:0000269" key="2">
    <source>
    </source>
</evidence>
<evidence type="ECO:0000269" key="3">
    <source>
    </source>
</evidence>
<evidence type="ECO:0000305" key="4"/>
<evidence type="ECO:0000312" key="5">
    <source>
        <dbReference type="EMBL" id="BAB15932.1"/>
    </source>
</evidence>
<name>GNIH_COTJA</name>
<organism evidence="5">
    <name type="scientific">Coturnix japonica</name>
    <name type="common">Japanese quail</name>
    <name type="synonym">Coturnix coturnix japonica</name>
    <dbReference type="NCBI Taxonomy" id="93934"/>
    <lineage>
        <taxon>Eukaryota</taxon>
        <taxon>Metazoa</taxon>
        <taxon>Chordata</taxon>
        <taxon>Craniata</taxon>
        <taxon>Vertebrata</taxon>
        <taxon>Euteleostomi</taxon>
        <taxon>Archelosauria</taxon>
        <taxon>Archosauria</taxon>
        <taxon>Dinosauria</taxon>
        <taxon>Saurischia</taxon>
        <taxon>Theropoda</taxon>
        <taxon>Coelurosauria</taxon>
        <taxon>Aves</taxon>
        <taxon>Neognathae</taxon>
        <taxon>Galloanserae</taxon>
        <taxon>Galliformes</taxon>
        <taxon>Phasianidae</taxon>
        <taxon>Perdicinae</taxon>
        <taxon>Coturnix</taxon>
    </lineage>
</organism>
<dbReference type="EMBL" id="AB039815">
    <property type="protein sequence ID" value="BAB15932.1"/>
    <property type="molecule type" value="mRNA"/>
</dbReference>
<dbReference type="Proteomes" id="UP000694412">
    <property type="component" value="Unplaced"/>
</dbReference>
<dbReference type="GO" id="GO:0005576">
    <property type="term" value="C:extracellular region"/>
    <property type="evidence" value="ECO:0007669"/>
    <property type="project" value="UniProtKB-SubCell"/>
</dbReference>
<dbReference type="GO" id="GO:0005102">
    <property type="term" value="F:signaling receptor binding"/>
    <property type="evidence" value="ECO:0007669"/>
    <property type="project" value="TreeGrafter"/>
</dbReference>
<dbReference type="GO" id="GO:0032277">
    <property type="term" value="P:negative regulation of gonadotropin secretion"/>
    <property type="evidence" value="ECO:0007669"/>
    <property type="project" value="TreeGrafter"/>
</dbReference>
<dbReference type="GO" id="GO:0007218">
    <property type="term" value="P:neuropeptide signaling pathway"/>
    <property type="evidence" value="ECO:0007669"/>
    <property type="project" value="UniProtKB-KW"/>
</dbReference>
<dbReference type="InterPro" id="IPR026297">
    <property type="entry name" value="FMRFamide-related/fGRP"/>
</dbReference>
<dbReference type="PANTHER" id="PTHR14403:SF6">
    <property type="entry name" value="PRO-FMRFAMIDE-RELATED NEUROPEPTIDE VF"/>
    <property type="match status" value="1"/>
</dbReference>
<dbReference type="PANTHER" id="PTHR14403">
    <property type="entry name" value="RFAMIDE PEPTIDE GONADOTROPIN INHIBITORY HORMONE"/>
    <property type="match status" value="1"/>
</dbReference>
<protein>
    <recommendedName>
        <fullName>Gonadotropin inhibitory hormone peptides</fullName>
    </recommendedName>
    <component>
        <recommendedName>
            <fullName>Gonadotropin inhibitory hormone</fullName>
            <shortName>GnIH</shortName>
        </recommendedName>
    </component>
    <component>
        <recommendedName>
            <fullName>Gonadotropin inhibitory hormone-related peptide 1</fullName>
            <shortName>GnIH-RP1</shortName>
        </recommendedName>
    </component>
    <component>
        <recommendedName>
            <fullName>Gonadotropin inhibitory hormone-related peptide 2</fullName>
            <shortName>GnIH-RP2</shortName>
        </recommendedName>
    </component>
</protein>
<sequence>MEIISTQKFILLTLATVAFLTPHGACLDELMKSSLESREDDDDKYYETKDSILEEKQRSLNFEEMKDWGSKNFMKVNTPTVNKVPNSVANLPLRFGRSNPEERSIKPSAYLPLRFGRAFGESLSRRAPNLSNRSGRSPLARSSIQSLLNLSQRFGKSVPISLSQGVQESEPGM</sequence>
<comment type="function">
    <text evidence="2">Hypothalamic factor, responsible for the negative regulation of gonadotropin secretion.</text>
</comment>
<comment type="subcellular location">
    <subcellularLocation>
        <location>Secreted</location>
    </subcellularLocation>
</comment>
<comment type="tissue specificity">
    <text evidence="2 3">Specifically expressed in the diencephalon.</text>
</comment>
<comment type="mass spectrometry">
    <molecule>Gonadotropin inhibitory hormone</molecule>
</comment>
<comment type="mass spectrometry">
    <molecule>Gonadotropin inhibitory hormone</molecule>
</comment>
<comment type="mass spectrometry">
    <molecule>Gonadotropin inhibitory hormone-related peptide 2</molecule>
</comment>
<comment type="similarity">
    <text evidence="4">Belongs to the FARP (FMRFamide related peptide) family.</text>
</comment>
<accession>Q9DGD4</accession>
<proteinExistence type="evidence at protein level"/>
<reference evidence="4" key="1">
    <citation type="journal article" date="2001" name="Biochem. J.">
        <title>Characterization of a cDNA encoding a novel avian hypothalamic neuropeptide exerting an inhibitory effect on gonadotropin release.</title>
        <authorList>
            <person name="Satake H."/>
            <person name="Hisada M."/>
            <person name="Kawada T."/>
            <person name="Minakata H."/>
            <person name="Ukena K."/>
            <person name="Tsutsui K."/>
        </authorList>
    </citation>
    <scope>NUCLEOTIDE SEQUENCE [MRNA]</scope>
    <scope>AMIDATION AT PHE-95; PHE-115 AND PHE-154</scope>
    <scope>TISSUE SPECIFICITY</scope>
    <scope>MASS SPECTROMETRY</scope>
    <source>
        <tissue>Brain</tissue>
    </source>
</reference>
<reference evidence="4" key="2">
    <citation type="journal article" date="2000" name="Biochem. Biophys. Res. Commun.">
        <title>A novel avian hypothalamic peptide inhibiting gonadotropin release.</title>
        <authorList>
            <person name="Tsutsui K."/>
            <person name="Saigoh E."/>
            <person name="Ukena K."/>
            <person name="Teranishi H."/>
            <person name="Fujisawa Y."/>
            <person name="Kikuchi M."/>
            <person name="Ishii S."/>
            <person name="Sharp P.J."/>
        </authorList>
    </citation>
    <scope>PROTEIN SEQUENCE OF 104-115</scope>
    <scope>AMIDATION AT PHE-115</scope>
    <scope>SYNTHESIS</scope>
    <scope>FUNCTION</scope>
    <scope>TISSUE SPECIFICITY</scope>
    <scope>MASS SPECTROMETRY</scope>
    <source>
        <tissue>Brain</tissue>
    </source>
</reference>
<feature type="signal peptide" evidence="1">
    <location>
        <begin position="1"/>
        <end position="26"/>
    </location>
</feature>
<feature type="propeptide" id="PRO_0000009944">
    <location>
        <begin position="27"/>
        <end position="82"/>
    </location>
</feature>
<feature type="peptide" id="PRO_0000009945" description="Gonadotropin inhibitory hormone-related peptide 1" evidence="1">
    <location>
        <begin position="84"/>
        <end position="95"/>
    </location>
</feature>
<feature type="propeptide" id="PRO_0000009946" evidence="2">
    <location>
        <begin position="98"/>
        <end position="103"/>
    </location>
</feature>
<feature type="peptide" id="PRO_0000009947" description="Gonadotropin inhibitory hormone">
    <location>
        <begin position="104"/>
        <end position="115"/>
    </location>
</feature>
<feature type="propeptide" id="PRO_0000009948">
    <location>
        <begin position="118"/>
        <end position="140"/>
    </location>
</feature>
<feature type="peptide" id="PRO_0000009949" description="Gonadotropin inhibitory hormone-related peptide 2">
    <location>
        <begin position="142"/>
        <end position="154"/>
    </location>
</feature>
<feature type="propeptide" id="PRO_0000009950">
    <location>
        <begin position="157"/>
        <end position="173"/>
    </location>
</feature>
<feature type="modified residue" description="Phenylalanine amide" evidence="3">
    <location>
        <position position="95"/>
    </location>
</feature>
<feature type="modified residue" description="Phenylalanine amide" evidence="2 3">
    <location>
        <position position="115"/>
    </location>
</feature>
<feature type="modified residue" description="Phenylalanine amide" evidence="3">
    <location>
        <position position="154"/>
    </location>
</feature>
<gene>
    <name type="primary">GNIH</name>
</gene>
<keyword id="KW-0027">Amidation</keyword>
<keyword id="KW-0903">Direct protein sequencing</keyword>
<keyword id="KW-0527">Neuropeptide</keyword>
<keyword id="KW-1185">Reference proteome</keyword>
<keyword id="KW-0964">Secreted</keyword>
<keyword id="KW-0732">Signal</keyword>